<name>RS20_AZOPC</name>
<proteinExistence type="inferred from homology"/>
<dbReference type="EMBL" id="AP010656">
    <property type="protein sequence ID" value="BAG83620.1"/>
    <property type="molecule type" value="Genomic_DNA"/>
</dbReference>
<dbReference type="RefSeq" id="WP_012573381.1">
    <property type="nucleotide sequence ID" value="NC_011565.1"/>
</dbReference>
<dbReference type="SMR" id="B6YQZ8"/>
<dbReference type="STRING" id="511995.CFPG_357"/>
<dbReference type="KEGG" id="aps:CFPG_357"/>
<dbReference type="eggNOG" id="COG0268">
    <property type="taxonomic scope" value="Bacteria"/>
</dbReference>
<dbReference type="HOGENOM" id="CLU_160655_3_2_10"/>
<dbReference type="OrthoDB" id="9808392at2"/>
<dbReference type="Proteomes" id="UP000000723">
    <property type="component" value="Chromosome"/>
</dbReference>
<dbReference type="GO" id="GO:1990904">
    <property type="term" value="C:ribonucleoprotein complex"/>
    <property type="evidence" value="ECO:0007669"/>
    <property type="project" value="UniProtKB-KW"/>
</dbReference>
<dbReference type="GO" id="GO:0005840">
    <property type="term" value="C:ribosome"/>
    <property type="evidence" value="ECO:0007669"/>
    <property type="project" value="UniProtKB-KW"/>
</dbReference>
<dbReference type="GO" id="GO:0019843">
    <property type="term" value="F:rRNA binding"/>
    <property type="evidence" value="ECO:0007669"/>
    <property type="project" value="UniProtKB-UniRule"/>
</dbReference>
<dbReference type="GO" id="GO:0003735">
    <property type="term" value="F:structural constituent of ribosome"/>
    <property type="evidence" value="ECO:0007669"/>
    <property type="project" value="InterPro"/>
</dbReference>
<dbReference type="GO" id="GO:0006412">
    <property type="term" value="P:translation"/>
    <property type="evidence" value="ECO:0007669"/>
    <property type="project" value="UniProtKB-UniRule"/>
</dbReference>
<dbReference type="Gene3D" id="1.20.58.110">
    <property type="entry name" value="Ribosomal protein S20"/>
    <property type="match status" value="1"/>
</dbReference>
<dbReference type="HAMAP" id="MF_00500">
    <property type="entry name" value="Ribosomal_bS20"/>
    <property type="match status" value="1"/>
</dbReference>
<dbReference type="InterPro" id="IPR002583">
    <property type="entry name" value="Ribosomal_bS20"/>
</dbReference>
<dbReference type="InterPro" id="IPR036510">
    <property type="entry name" value="Ribosomal_bS20_sf"/>
</dbReference>
<dbReference type="NCBIfam" id="TIGR00029">
    <property type="entry name" value="S20"/>
    <property type="match status" value="1"/>
</dbReference>
<dbReference type="Pfam" id="PF01649">
    <property type="entry name" value="Ribosomal_S20p"/>
    <property type="match status" value="1"/>
</dbReference>
<dbReference type="SUPFAM" id="SSF46992">
    <property type="entry name" value="Ribosomal protein S20"/>
    <property type="match status" value="1"/>
</dbReference>
<evidence type="ECO:0000255" key="1">
    <source>
        <dbReference type="HAMAP-Rule" id="MF_00500"/>
    </source>
</evidence>
<evidence type="ECO:0000305" key="2"/>
<accession>B6YQZ8</accession>
<organism>
    <name type="scientific">Azobacteroides pseudotrichonymphae genomovar. CFP2</name>
    <dbReference type="NCBI Taxonomy" id="511995"/>
    <lineage>
        <taxon>Bacteria</taxon>
        <taxon>Pseudomonadati</taxon>
        <taxon>Bacteroidota</taxon>
        <taxon>Bacteroidia</taxon>
        <taxon>Bacteroidales</taxon>
        <taxon>Candidatus Azobacteroides</taxon>
    </lineage>
</organism>
<keyword id="KW-1185">Reference proteome</keyword>
<keyword id="KW-0687">Ribonucleoprotein</keyword>
<keyword id="KW-0689">Ribosomal protein</keyword>
<keyword id="KW-0694">RNA-binding</keyword>
<keyword id="KW-0699">rRNA-binding</keyword>
<feature type="chain" id="PRO_1000126396" description="Small ribosomal subunit protein bS20">
    <location>
        <begin position="1"/>
        <end position="84"/>
    </location>
</feature>
<comment type="function">
    <text evidence="1">Binds directly to 16S ribosomal RNA.</text>
</comment>
<comment type="similarity">
    <text evidence="1">Belongs to the bacterial ribosomal protein bS20 family.</text>
</comment>
<sequence length="84" mass="9637">MANHKSSIKRIRKSQIRRLRNKYYAKTARNAVKNIRGTADKVQAGVLYKKVSKMLDKLAKKNVIHNNKANNLKSKLALYVNSLN</sequence>
<gene>
    <name evidence="1" type="primary">rpsT</name>
    <name type="ordered locus">CFPG_357</name>
</gene>
<protein>
    <recommendedName>
        <fullName evidence="1">Small ribosomal subunit protein bS20</fullName>
    </recommendedName>
    <alternativeName>
        <fullName evidence="2">30S ribosomal protein S20</fullName>
    </alternativeName>
</protein>
<reference key="1">
    <citation type="journal article" date="2008" name="Science">
        <title>Genome of an endosymbiont coupling N2 fixation to cellulolysis within RT protist cells in termite gut.</title>
        <authorList>
            <person name="Hongoh Y."/>
            <person name="Sharma V.K."/>
            <person name="Prakash T."/>
            <person name="Noda S."/>
            <person name="Toh H."/>
            <person name="Taylor T.D."/>
            <person name="Kudo T."/>
            <person name="Sakaki Y."/>
            <person name="Toyoda A."/>
            <person name="Hattori M."/>
            <person name="Ohkuma M."/>
        </authorList>
    </citation>
    <scope>NUCLEOTIDE SEQUENCE [LARGE SCALE GENOMIC DNA]</scope>
</reference>